<proteinExistence type="inferred from homology"/>
<feature type="chain" id="PRO_0000263310" description="Peptide chain release factor 1">
    <location>
        <begin position="1"/>
        <end position="357"/>
    </location>
</feature>
<feature type="region of interest" description="Disordered" evidence="2">
    <location>
        <begin position="284"/>
        <end position="304"/>
    </location>
</feature>
<feature type="modified residue" description="N5-methylglutamine" evidence="1">
    <location>
        <position position="234"/>
    </location>
</feature>
<gene>
    <name evidence="1" type="primary">prfA</name>
    <name type="ordered locus">SAR11_0518</name>
</gene>
<dbReference type="EMBL" id="CP000084">
    <property type="protein sequence ID" value="AAZ21340.1"/>
    <property type="molecule type" value="Genomic_DNA"/>
</dbReference>
<dbReference type="RefSeq" id="WP_011281769.1">
    <property type="nucleotide sequence ID" value="NC_007205.1"/>
</dbReference>
<dbReference type="SMR" id="Q4FN99"/>
<dbReference type="STRING" id="335992.SAR11_0518"/>
<dbReference type="GeneID" id="66295020"/>
<dbReference type="KEGG" id="pub:SAR11_0518"/>
<dbReference type="eggNOG" id="COG0216">
    <property type="taxonomic scope" value="Bacteria"/>
</dbReference>
<dbReference type="HOGENOM" id="CLU_036856_0_1_5"/>
<dbReference type="OrthoDB" id="9806673at2"/>
<dbReference type="Proteomes" id="UP000002528">
    <property type="component" value="Chromosome"/>
</dbReference>
<dbReference type="GO" id="GO:0005737">
    <property type="term" value="C:cytoplasm"/>
    <property type="evidence" value="ECO:0007669"/>
    <property type="project" value="UniProtKB-SubCell"/>
</dbReference>
<dbReference type="GO" id="GO:0016149">
    <property type="term" value="F:translation release factor activity, codon specific"/>
    <property type="evidence" value="ECO:0007669"/>
    <property type="project" value="UniProtKB-UniRule"/>
</dbReference>
<dbReference type="FunFam" id="3.30.160.20:FF:000004">
    <property type="entry name" value="Peptide chain release factor 1"/>
    <property type="match status" value="1"/>
</dbReference>
<dbReference type="FunFam" id="3.30.70.1660:FF:000002">
    <property type="entry name" value="Peptide chain release factor 1"/>
    <property type="match status" value="1"/>
</dbReference>
<dbReference type="FunFam" id="3.30.70.1660:FF:000004">
    <property type="entry name" value="Peptide chain release factor 1"/>
    <property type="match status" value="1"/>
</dbReference>
<dbReference type="Gene3D" id="3.30.160.20">
    <property type="match status" value="1"/>
</dbReference>
<dbReference type="Gene3D" id="3.30.70.1660">
    <property type="match status" value="1"/>
</dbReference>
<dbReference type="Gene3D" id="6.10.140.1950">
    <property type="match status" value="1"/>
</dbReference>
<dbReference type="HAMAP" id="MF_00093">
    <property type="entry name" value="Rel_fac_1"/>
    <property type="match status" value="1"/>
</dbReference>
<dbReference type="InterPro" id="IPR005139">
    <property type="entry name" value="PCRF"/>
</dbReference>
<dbReference type="InterPro" id="IPR000352">
    <property type="entry name" value="Pep_chain_release_fac_I"/>
</dbReference>
<dbReference type="InterPro" id="IPR045853">
    <property type="entry name" value="Pep_chain_release_fac_I_sf"/>
</dbReference>
<dbReference type="InterPro" id="IPR050057">
    <property type="entry name" value="Prokaryotic/Mito_RF"/>
</dbReference>
<dbReference type="InterPro" id="IPR004373">
    <property type="entry name" value="RF-1"/>
</dbReference>
<dbReference type="NCBIfam" id="TIGR00019">
    <property type="entry name" value="prfA"/>
    <property type="match status" value="1"/>
</dbReference>
<dbReference type="NCBIfam" id="NF001859">
    <property type="entry name" value="PRK00591.1"/>
    <property type="match status" value="1"/>
</dbReference>
<dbReference type="PANTHER" id="PTHR43804">
    <property type="entry name" value="LD18447P"/>
    <property type="match status" value="1"/>
</dbReference>
<dbReference type="PANTHER" id="PTHR43804:SF7">
    <property type="entry name" value="LD18447P"/>
    <property type="match status" value="1"/>
</dbReference>
<dbReference type="Pfam" id="PF03462">
    <property type="entry name" value="PCRF"/>
    <property type="match status" value="1"/>
</dbReference>
<dbReference type="Pfam" id="PF00472">
    <property type="entry name" value="RF-1"/>
    <property type="match status" value="1"/>
</dbReference>
<dbReference type="SMART" id="SM00937">
    <property type="entry name" value="PCRF"/>
    <property type="match status" value="1"/>
</dbReference>
<dbReference type="SUPFAM" id="SSF75620">
    <property type="entry name" value="Release factor"/>
    <property type="match status" value="1"/>
</dbReference>
<dbReference type="PROSITE" id="PS00745">
    <property type="entry name" value="RF_PROK_I"/>
    <property type="match status" value="1"/>
</dbReference>
<reference key="1">
    <citation type="journal article" date="2005" name="Science">
        <title>Genome streamlining in a cosmopolitan oceanic bacterium.</title>
        <authorList>
            <person name="Giovannoni S.J."/>
            <person name="Tripp H.J."/>
            <person name="Givan S."/>
            <person name="Podar M."/>
            <person name="Vergin K.L."/>
            <person name="Baptista D."/>
            <person name="Bibbs L."/>
            <person name="Eads J."/>
            <person name="Richardson T.H."/>
            <person name="Noordewier M."/>
            <person name="Rappe M.S."/>
            <person name="Short J.M."/>
            <person name="Carrington J.C."/>
            <person name="Mathur E.J."/>
        </authorList>
    </citation>
    <scope>NUCLEOTIDE SEQUENCE [LARGE SCALE GENOMIC DNA]</scope>
    <source>
        <strain>HTCC1062</strain>
    </source>
</reference>
<evidence type="ECO:0000255" key="1">
    <source>
        <dbReference type="HAMAP-Rule" id="MF_00093"/>
    </source>
</evidence>
<evidence type="ECO:0000256" key="2">
    <source>
        <dbReference type="SAM" id="MobiDB-lite"/>
    </source>
</evidence>
<sequence>MIPLKTIEDLISKHSILEKELSSGEVDKKLFAEKSKEYSDLNEVIDDARKYFSYEGEKKDLEKILSDSNSDNEFKEMAEVELKDLKLENETIEKKLKLFLLPKDEADKKNAIIEIRAGTGGLEASLFAADLFKMYEKVSHQKKWELELISMSQSEAGGLKEVIASIRGKNIYSTLKYESGVHRVQRVPDTETQGRVHTSAATVAVLPEAEEVDIKINDSDLRIDVFRAGGPGGQSVNTTDSAVRITHIPTGLSVSQQDQKSQHKNKAKGMLILRSRLYELERSRIEGERSEDRKSKIGTGDRSERIRTYNFPQGRVTDHRINLTLHKLEAFLEGEAFDEMVENLTLQAQEEKLSNLN</sequence>
<keyword id="KW-0963">Cytoplasm</keyword>
<keyword id="KW-0488">Methylation</keyword>
<keyword id="KW-0648">Protein biosynthesis</keyword>
<keyword id="KW-1185">Reference proteome</keyword>
<protein>
    <recommendedName>
        <fullName evidence="1">Peptide chain release factor 1</fullName>
        <shortName evidence="1">RF-1</shortName>
    </recommendedName>
</protein>
<organism>
    <name type="scientific">Pelagibacter ubique (strain HTCC1062)</name>
    <dbReference type="NCBI Taxonomy" id="335992"/>
    <lineage>
        <taxon>Bacteria</taxon>
        <taxon>Pseudomonadati</taxon>
        <taxon>Pseudomonadota</taxon>
        <taxon>Alphaproteobacteria</taxon>
        <taxon>Candidatus Pelagibacterales</taxon>
        <taxon>Candidatus Pelagibacteraceae</taxon>
        <taxon>Candidatus Pelagibacter</taxon>
    </lineage>
</organism>
<accession>Q4FN99</accession>
<name>RF1_PELUB</name>
<comment type="function">
    <text evidence="1">Peptide chain release factor 1 directs the termination of translation in response to the peptide chain termination codons UAG and UAA.</text>
</comment>
<comment type="subcellular location">
    <subcellularLocation>
        <location evidence="1">Cytoplasm</location>
    </subcellularLocation>
</comment>
<comment type="PTM">
    <text evidence="1">Methylated by PrmC. Methylation increases the termination efficiency of RF1.</text>
</comment>
<comment type="similarity">
    <text evidence="1">Belongs to the prokaryotic/mitochondrial release factor family.</text>
</comment>